<evidence type="ECO:0000255" key="1">
    <source>
        <dbReference type="HAMAP-Rule" id="MF_00358"/>
    </source>
</evidence>
<evidence type="ECO:0000256" key="2">
    <source>
        <dbReference type="SAM" id="MobiDB-lite"/>
    </source>
</evidence>
<evidence type="ECO:0000305" key="3"/>
<feature type="chain" id="PRO_1000120666" description="Small ribosomal subunit protein bS21">
    <location>
        <begin position="1"/>
        <end position="71"/>
    </location>
</feature>
<feature type="region of interest" description="Disordered" evidence="2">
    <location>
        <begin position="39"/>
        <end position="71"/>
    </location>
</feature>
<feature type="compositionally biased region" description="Basic residues" evidence="2">
    <location>
        <begin position="45"/>
        <end position="59"/>
    </location>
</feature>
<feature type="compositionally biased region" description="Basic and acidic residues" evidence="2">
    <location>
        <begin position="60"/>
        <end position="71"/>
    </location>
</feature>
<comment type="similarity">
    <text evidence="1">Belongs to the bacterial ribosomal protein bS21 family.</text>
</comment>
<protein>
    <recommendedName>
        <fullName evidence="1">Small ribosomal subunit protein bS21</fullName>
    </recommendedName>
    <alternativeName>
        <fullName evidence="3">30S ribosomal protein S21</fullName>
    </alternativeName>
</protein>
<sequence>MPSVKVRENEPFEFALRRFKRTCEKAGVLAETRKREFYEKPTQERKRKAAAAVKRQLRRSSRDVTKRQRLY</sequence>
<organism>
    <name type="scientific">Stenotrophomonas maltophilia (strain K279a)</name>
    <dbReference type="NCBI Taxonomy" id="522373"/>
    <lineage>
        <taxon>Bacteria</taxon>
        <taxon>Pseudomonadati</taxon>
        <taxon>Pseudomonadota</taxon>
        <taxon>Gammaproteobacteria</taxon>
        <taxon>Lysobacterales</taxon>
        <taxon>Lysobacteraceae</taxon>
        <taxon>Stenotrophomonas</taxon>
        <taxon>Stenotrophomonas maltophilia group</taxon>
    </lineage>
</organism>
<dbReference type="EMBL" id="AM743169">
    <property type="protein sequence ID" value="CAQ44042.1"/>
    <property type="molecule type" value="Genomic_DNA"/>
</dbReference>
<dbReference type="RefSeq" id="WP_002808376.1">
    <property type="nucleotide sequence ID" value="NC_010943.1"/>
</dbReference>
<dbReference type="SMR" id="B2FK05"/>
<dbReference type="EnsemblBacteria" id="CAQ44042">
    <property type="protein sequence ID" value="CAQ44042"/>
    <property type="gene ID" value="Smlt0444"/>
</dbReference>
<dbReference type="GeneID" id="97512051"/>
<dbReference type="KEGG" id="sml:Smlt0444"/>
<dbReference type="eggNOG" id="COG0828">
    <property type="taxonomic scope" value="Bacteria"/>
</dbReference>
<dbReference type="HOGENOM" id="CLU_159258_1_0_6"/>
<dbReference type="Proteomes" id="UP000008840">
    <property type="component" value="Chromosome"/>
</dbReference>
<dbReference type="GO" id="GO:1990904">
    <property type="term" value="C:ribonucleoprotein complex"/>
    <property type="evidence" value="ECO:0007669"/>
    <property type="project" value="UniProtKB-KW"/>
</dbReference>
<dbReference type="GO" id="GO:0005840">
    <property type="term" value="C:ribosome"/>
    <property type="evidence" value="ECO:0007669"/>
    <property type="project" value="UniProtKB-KW"/>
</dbReference>
<dbReference type="GO" id="GO:0003735">
    <property type="term" value="F:structural constituent of ribosome"/>
    <property type="evidence" value="ECO:0007669"/>
    <property type="project" value="InterPro"/>
</dbReference>
<dbReference type="GO" id="GO:0006412">
    <property type="term" value="P:translation"/>
    <property type="evidence" value="ECO:0007669"/>
    <property type="project" value="UniProtKB-UniRule"/>
</dbReference>
<dbReference type="Gene3D" id="1.20.5.1150">
    <property type="entry name" value="Ribosomal protein S8"/>
    <property type="match status" value="1"/>
</dbReference>
<dbReference type="HAMAP" id="MF_00358">
    <property type="entry name" value="Ribosomal_bS21"/>
    <property type="match status" value="1"/>
</dbReference>
<dbReference type="InterPro" id="IPR001911">
    <property type="entry name" value="Ribosomal_bS21"/>
</dbReference>
<dbReference type="InterPro" id="IPR018278">
    <property type="entry name" value="Ribosomal_bS21_CS"/>
</dbReference>
<dbReference type="InterPro" id="IPR038380">
    <property type="entry name" value="Ribosomal_bS21_sf"/>
</dbReference>
<dbReference type="NCBIfam" id="TIGR00030">
    <property type="entry name" value="S21p"/>
    <property type="match status" value="1"/>
</dbReference>
<dbReference type="PANTHER" id="PTHR21109">
    <property type="entry name" value="MITOCHONDRIAL 28S RIBOSOMAL PROTEIN S21"/>
    <property type="match status" value="1"/>
</dbReference>
<dbReference type="PANTHER" id="PTHR21109:SF22">
    <property type="entry name" value="SMALL RIBOSOMAL SUBUNIT PROTEIN BS21"/>
    <property type="match status" value="1"/>
</dbReference>
<dbReference type="Pfam" id="PF01165">
    <property type="entry name" value="Ribosomal_S21"/>
    <property type="match status" value="1"/>
</dbReference>
<dbReference type="PRINTS" id="PR00976">
    <property type="entry name" value="RIBOSOMALS21"/>
</dbReference>
<dbReference type="PROSITE" id="PS01181">
    <property type="entry name" value="RIBOSOMAL_S21"/>
    <property type="match status" value="1"/>
</dbReference>
<keyword id="KW-1185">Reference proteome</keyword>
<keyword id="KW-0687">Ribonucleoprotein</keyword>
<keyword id="KW-0689">Ribosomal protein</keyword>
<name>RS21_STRMK</name>
<proteinExistence type="inferred from homology"/>
<reference key="1">
    <citation type="journal article" date="2008" name="Genome Biol.">
        <title>The complete genome, comparative and functional analysis of Stenotrophomonas maltophilia reveals an organism heavily shielded by drug resistance determinants.</title>
        <authorList>
            <person name="Crossman L.C."/>
            <person name="Gould V.C."/>
            <person name="Dow J.M."/>
            <person name="Vernikos G.S."/>
            <person name="Okazaki A."/>
            <person name="Sebaihia M."/>
            <person name="Saunders D."/>
            <person name="Arrowsmith C."/>
            <person name="Carver T."/>
            <person name="Peters N."/>
            <person name="Adlem E."/>
            <person name="Kerhornou A."/>
            <person name="Lord A."/>
            <person name="Murphy L."/>
            <person name="Seeger K."/>
            <person name="Squares R."/>
            <person name="Rutter S."/>
            <person name="Quail M.A."/>
            <person name="Rajandream M.A."/>
            <person name="Harris D."/>
            <person name="Churcher C."/>
            <person name="Bentley S.D."/>
            <person name="Parkhill J."/>
            <person name="Thomson N.R."/>
            <person name="Avison M.B."/>
        </authorList>
    </citation>
    <scope>NUCLEOTIDE SEQUENCE [LARGE SCALE GENOMIC DNA]</scope>
    <source>
        <strain>K279a</strain>
    </source>
</reference>
<accession>B2FK05</accession>
<gene>
    <name evidence="1" type="primary">rpsU</name>
    <name type="ordered locus">Smlt0444</name>
</gene>